<sequence length="356" mass="39094">MMRPPEHQLLSSLDQRSRDIFRLIVETYLNDGDPVGSRNLSRLLPHTLSPATIRNVMSDLEHLGLIYAPHISAGRLPTQIGLRFFVDAFLEVGDLPPEERSSIEAQVRAAGTSNSVESVLTEASQVLSGLSRGAGLVLTNKTDVALKHIEFVRLEPMRALAVLVMQNGDVENRVIDLPAGISTSQLIEASNFLNAHIHGHTLSEAKSELRKLSEETRRELDQLSQELVAKGLAVWSGAGADQPARLIVRGRANLLENVHAQEDIERLRHLFDDLETKDGMVQLLDLAEAGSGVRIFIGSENKLFSLSGSSLVVAPYRDSEQRVIGALGVIGPTRLNYARIVPMVDYTAQIVSRLLR</sequence>
<proteinExistence type="inferred from homology"/>
<organism>
    <name type="scientific">Brucella melitensis biotype 2 (strain ATCC 23457)</name>
    <dbReference type="NCBI Taxonomy" id="546272"/>
    <lineage>
        <taxon>Bacteria</taxon>
        <taxon>Pseudomonadati</taxon>
        <taxon>Pseudomonadota</taxon>
        <taxon>Alphaproteobacteria</taxon>
        <taxon>Hyphomicrobiales</taxon>
        <taxon>Brucellaceae</taxon>
        <taxon>Brucella/Ochrobactrum group</taxon>
        <taxon>Brucella</taxon>
    </lineage>
</organism>
<accession>C0RGM6</accession>
<gene>
    <name evidence="1" type="primary">hrcA</name>
    <name type="ordered locus">BMEA_A0178</name>
</gene>
<reference key="1">
    <citation type="submission" date="2009-03" db="EMBL/GenBank/DDBJ databases">
        <title>Brucella melitensis ATCC 23457 whole genome shotgun sequencing project.</title>
        <authorList>
            <person name="Setubal J.C."/>
            <person name="Boyle S."/>
            <person name="Crasta O.R."/>
            <person name="Gillespie J.J."/>
            <person name="Kenyon R.W."/>
            <person name="Lu J."/>
            <person name="Mane S."/>
            <person name="Nagrani S."/>
            <person name="Shallom J.M."/>
            <person name="Shallom S."/>
            <person name="Shukla M."/>
            <person name="Snyder E.E."/>
            <person name="Sobral B.W."/>
            <person name="Wattam A.R."/>
            <person name="Will R."/>
            <person name="Williams K."/>
            <person name="Yoo H."/>
            <person name="Munk C."/>
            <person name="Tapia R."/>
            <person name="Han C."/>
            <person name="Detter J.C."/>
            <person name="Bruce D."/>
            <person name="Brettin T.S."/>
        </authorList>
    </citation>
    <scope>NUCLEOTIDE SEQUENCE [LARGE SCALE GENOMIC DNA]</scope>
    <source>
        <strain>ATCC 23457</strain>
    </source>
</reference>
<evidence type="ECO:0000255" key="1">
    <source>
        <dbReference type="HAMAP-Rule" id="MF_00081"/>
    </source>
</evidence>
<keyword id="KW-0678">Repressor</keyword>
<keyword id="KW-0346">Stress response</keyword>
<keyword id="KW-0804">Transcription</keyword>
<keyword id="KW-0805">Transcription regulation</keyword>
<protein>
    <recommendedName>
        <fullName evidence="1">Heat-inducible transcription repressor HrcA</fullName>
    </recommendedName>
</protein>
<comment type="function">
    <text evidence="1">Negative regulator of class I heat shock genes (grpE-dnaK-dnaJ and groELS operons). Prevents heat-shock induction of these operons.</text>
</comment>
<comment type="similarity">
    <text evidence="1">Belongs to the HrcA family.</text>
</comment>
<name>HRCA_BRUMB</name>
<dbReference type="EMBL" id="CP001488">
    <property type="protein sequence ID" value="ACN99983.1"/>
    <property type="molecule type" value="Genomic_DNA"/>
</dbReference>
<dbReference type="SMR" id="C0RGM6"/>
<dbReference type="KEGG" id="bmi:BMEA_A0178"/>
<dbReference type="HOGENOM" id="CLU_050019_0_0_5"/>
<dbReference type="Proteomes" id="UP000001748">
    <property type="component" value="Chromosome I"/>
</dbReference>
<dbReference type="GO" id="GO:0003677">
    <property type="term" value="F:DNA binding"/>
    <property type="evidence" value="ECO:0007669"/>
    <property type="project" value="InterPro"/>
</dbReference>
<dbReference type="GO" id="GO:0045892">
    <property type="term" value="P:negative regulation of DNA-templated transcription"/>
    <property type="evidence" value="ECO:0007669"/>
    <property type="project" value="UniProtKB-UniRule"/>
</dbReference>
<dbReference type="Gene3D" id="3.30.450.40">
    <property type="match status" value="1"/>
</dbReference>
<dbReference type="Gene3D" id="3.30.390.60">
    <property type="entry name" value="Heat-inducible transcription repressor hrca homolog, domain 3"/>
    <property type="match status" value="1"/>
</dbReference>
<dbReference type="Gene3D" id="1.10.10.10">
    <property type="entry name" value="Winged helix-like DNA-binding domain superfamily/Winged helix DNA-binding domain"/>
    <property type="match status" value="1"/>
</dbReference>
<dbReference type="HAMAP" id="MF_00081">
    <property type="entry name" value="HrcA"/>
    <property type="match status" value="1"/>
</dbReference>
<dbReference type="InterPro" id="IPR029016">
    <property type="entry name" value="GAF-like_dom_sf"/>
</dbReference>
<dbReference type="InterPro" id="IPR002571">
    <property type="entry name" value="HrcA"/>
</dbReference>
<dbReference type="InterPro" id="IPR021153">
    <property type="entry name" value="HrcA_C"/>
</dbReference>
<dbReference type="InterPro" id="IPR036388">
    <property type="entry name" value="WH-like_DNA-bd_sf"/>
</dbReference>
<dbReference type="InterPro" id="IPR036390">
    <property type="entry name" value="WH_DNA-bd_sf"/>
</dbReference>
<dbReference type="InterPro" id="IPR023120">
    <property type="entry name" value="WHTH_transcript_rep_HrcA_IDD"/>
</dbReference>
<dbReference type="NCBIfam" id="TIGR00331">
    <property type="entry name" value="hrcA"/>
    <property type="match status" value="1"/>
</dbReference>
<dbReference type="PANTHER" id="PTHR34824">
    <property type="entry name" value="HEAT-INDUCIBLE TRANSCRIPTION REPRESSOR HRCA"/>
    <property type="match status" value="1"/>
</dbReference>
<dbReference type="PANTHER" id="PTHR34824:SF1">
    <property type="entry name" value="HEAT-INDUCIBLE TRANSCRIPTION REPRESSOR HRCA"/>
    <property type="match status" value="1"/>
</dbReference>
<dbReference type="Pfam" id="PF01628">
    <property type="entry name" value="HrcA"/>
    <property type="match status" value="1"/>
</dbReference>
<dbReference type="PIRSF" id="PIRSF005485">
    <property type="entry name" value="HrcA"/>
    <property type="match status" value="1"/>
</dbReference>
<dbReference type="SUPFAM" id="SSF55781">
    <property type="entry name" value="GAF domain-like"/>
    <property type="match status" value="1"/>
</dbReference>
<dbReference type="SUPFAM" id="SSF46785">
    <property type="entry name" value="Winged helix' DNA-binding domain"/>
    <property type="match status" value="1"/>
</dbReference>
<feature type="chain" id="PRO_1000118293" description="Heat-inducible transcription repressor HrcA">
    <location>
        <begin position="1"/>
        <end position="356"/>
    </location>
</feature>